<comment type="function">
    <text evidence="1">Catalyzes the condensation of the acetyl group of acetyl-CoA with 3-methyl-2-oxobutanoate (2-ketoisovalerate) to form 3-carboxy-3-hydroxy-4-methylpentanoate (2-isopropylmalate).</text>
</comment>
<comment type="catalytic activity">
    <reaction evidence="1">
        <text>3-methyl-2-oxobutanoate + acetyl-CoA + H2O = (2S)-2-isopropylmalate + CoA + H(+)</text>
        <dbReference type="Rhea" id="RHEA:21524"/>
        <dbReference type="ChEBI" id="CHEBI:1178"/>
        <dbReference type="ChEBI" id="CHEBI:11851"/>
        <dbReference type="ChEBI" id="CHEBI:15377"/>
        <dbReference type="ChEBI" id="CHEBI:15378"/>
        <dbReference type="ChEBI" id="CHEBI:57287"/>
        <dbReference type="ChEBI" id="CHEBI:57288"/>
        <dbReference type="EC" id="2.3.3.13"/>
    </reaction>
</comment>
<comment type="cofactor">
    <cofactor evidence="1">
        <name>Mg(2+)</name>
        <dbReference type="ChEBI" id="CHEBI:18420"/>
    </cofactor>
</comment>
<comment type="pathway">
    <text evidence="1">Amino-acid biosynthesis; L-leucine biosynthesis; L-leucine from 3-methyl-2-oxobutanoate: step 1/4.</text>
</comment>
<comment type="subunit">
    <text evidence="1">Homodimer.</text>
</comment>
<comment type="subcellular location">
    <subcellularLocation>
        <location evidence="1">Cytoplasm</location>
    </subcellularLocation>
</comment>
<comment type="similarity">
    <text evidence="1">Belongs to the alpha-IPM synthase/homocitrate synthase family. LeuA type 2 subfamily.</text>
</comment>
<sequence length="588" mass="64985">MKSTQTPSGMPIHKYRPFHEQITVDLRDRTWPARRITEAPRWCAVDLRDGNQALIDPMSPERKRIMFNLLVRMGYKEIEVGFPSASQTDFDFVRSLIEEGAIPDDVTIQVLTQAREHLIARTYESIRGAKQAIVHLYNSTSVLQREVVFRTDRQGIIDIALEGARLCKRYEETIPETDVYYEYSPESYTGTELEFAAEICNRVVEVFDPTPERKVILNLPATVEMATPNVYADSIEWMCRHLDRRDEILVSLHPHNDRGTAVAAAELGYLAGADRIEGCLFGNGERTGNVDLVALGINLFTQGIDPQIDFSDLDGIKRTAEHCNQLAVPERSPWAGDLVYTAFSGSHQDAIKKGFEAMAVDAAAQGVTVDDIPWAVPYLPVDPQDLGRSYEAVIRVNSQSGKGGVAYLLKADHSLDLPRRLQIEFSGVVQAKTDAEGGEVTSAQIWSVFQDEYLPAPLDRVEEKWGRFELTSTRTSSDMGGSVSLDVVLRDGDEVREASASGNGPIAAFLQVLADQGVEVRLLDYVEHALSASGDALAASYVELEVEGVRLWGVGIDEDSSTASLEAIVSGVNRAIRRTVREPELAAV</sequence>
<accession>B0RCQ8</accession>
<protein>
    <recommendedName>
        <fullName evidence="1">2-isopropylmalate synthase</fullName>
        <ecNumber evidence="1">2.3.3.13</ecNumber>
    </recommendedName>
    <alternativeName>
        <fullName evidence="1">Alpha-IPM synthase</fullName>
    </alternativeName>
    <alternativeName>
        <fullName evidence="1">Alpha-isopropylmalate synthase</fullName>
    </alternativeName>
</protein>
<dbReference type="EC" id="2.3.3.13" evidence="1"/>
<dbReference type="EMBL" id="AM849034">
    <property type="protein sequence ID" value="CAQ01829.1"/>
    <property type="molecule type" value="Genomic_DNA"/>
</dbReference>
<dbReference type="RefSeq" id="WP_012299074.1">
    <property type="nucleotide sequence ID" value="NZ_MZMN01000003.1"/>
</dbReference>
<dbReference type="SMR" id="B0RCQ8"/>
<dbReference type="STRING" id="31964.CMS1727"/>
<dbReference type="KEGG" id="cms:CMS1727"/>
<dbReference type="eggNOG" id="COG0119">
    <property type="taxonomic scope" value="Bacteria"/>
</dbReference>
<dbReference type="HOGENOM" id="CLU_004588_3_0_11"/>
<dbReference type="OrthoDB" id="9803573at2"/>
<dbReference type="UniPathway" id="UPA00048">
    <property type="reaction ID" value="UER00070"/>
</dbReference>
<dbReference type="Proteomes" id="UP000001318">
    <property type="component" value="Chromosome"/>
</dbReference>
<dbReference type="GO" id="GO:0005737">
    <property type="term" value="C:cytoplasm"/>
    <property type="evidence" value="ECO:0007669"/>
    <property type="project" value="UniProtKB-SubCell"/>
</dbReference>
<dbReference type="GO" id="GO:0003852">
    <property type="term" value="F:2-isopropylmalate synthase activity"/>
    <property type="evidence" value="ECO:0007669"/>
    <property type="project" value="UniProtKB-UniRule"/>
</dbReference>
<dbReference type="GO" id="GO:0003985">
    <property type="term" value="F:acetyl-CoA C-acetyltransferase activity"/>
    <property type="evidence" value="ECO:0007669"/>
    <property type="project" value="UniProtKB-UniRule"/>
</dbReference>
<dbReference type="GO" id="GO:0000287">
    <property type="term" value="F:magnesium ion binding"/>
    <property type="evidence" value="ECO:0007669"/>
    <property type="project" value="UniProtKB-UniRule"/>
</dbReference>
<dbReference type="GO" id="GO:0009098">
    <property type="term" value="P:L-leucine biosynthetic process"/>
    <property type="evidence" value="ECO:0007669"/>
    <property type="project" value="UniProtKB-UniRule"/>
</dbReference>
<dbReference type="CDD" id="cd07942">
    <property type="entry name" value="DRE_TIM_LeuA"/>
    <property type="match status" value="1"/>
</dbReference>
<dbReference type="FunFam" id="3.20.20.70:FF:000045">
    <property type="entry name" value="2-isopropylmalate synthase"/>
    <property type="match status" value="1"/>
</dbReference>
<dbReference type="Gene3D" id="3.30.160.270">
    <property type="match status" value="1"/>
</dbReference>
<dbReference type="Gene3D" id="3.20.20.70">
    <property type="entry name" value="Aldolase class I"/>
    <property type="match status" value="1"/>
</dbReference>
<dbReference type="HAMAP" id="MF_00572">
    <property type="entry name" value="LeuA_type2"/>
    <property type="match status" value="1"/>
</dbReference>
<dbReference type="InterPro" id="IPR013709">
    <property type="entry name" value="2-isopropylmalate_synth_dimer"/>
</dbReference>
<dbReference type="InterPro" id="IPR002034">
    <property type="entry name" value="AIPM/Hcit_synth_CS"/>
</dbReference>
<dbReference type="InterPro" id="IPR013785">
    <property type="entry name" value="Aldolase_TIM"/>
</dbReference>
<dbReference type="InterPro" id="IPR005668">
    <property type="entry name" value="IPM_Synthase"/>
</dbReference>
<dbReference type="InterPro" id="IPR054692">
    <property type="entry name" value="LeuA-like_post-cat"/>
</dbReference>
<dbReference type="InterPro" id="IPR036230">
    <property type="entry name" value="LeuA_allosteric_dom_sf"/>
</dbReference>
<dbReference type="InterPro" id="IPR039371">
    <property type="entry name" value="LeuA_N_DRE-TIM"/>
</dbReference>
<dbReference type="InterPro" id="IPR000891">
    <property type="entry name" value="PYR_CT"/>
</dbReference>
<dbReference type="NCBIfam" id="TIGR00970">
    <property type="entry name" value="leuA_yeast"/>
    <property type="match status" value="1"/>
</dbReference>
<dbReference type="NCBIfam" id="NF002991">
    <property type="entry name" value="PRK03739.1"/>
    <property type="match status" value="1"/>
</dbReference>
<dbReference type="PANTHER" id="PTHR46911">
    <property type="match status" value="1"/>
</dbReference>
<dbReference type="PANTHER" id="PTHR46911:SF1">
    <property type="entry name" value="2-ISOPROPYLMALATE SYNTHASE"/>
    <property type="match status" value="1"/>
</dbReference>
<dbReference type="Pfam" id="PF00682">
    <property type="entry name" value="HMGL-like"/>
    <property type="match status" value="1"/>
</dbReference>
<dbReference type="Pfam" id="PF22615">
    <property type="entry name" value="IPMS_D2"/>
    <property type="match status" value="1"/>
</dbReference>
<dbReference type="Pfam" id="PF08502">
    <property type="entry name" value="LeuA_dimer"/>
    <property type="match status" value="1"/>
</dbReference>
<dbReference type="SMART" id="SM00917">
    <property type="entry name" value="LeuA_dimer"/>
    <property type="match status" value="1"/>
</dbReference>
<dbReference type="SUPFAM" id="SSF110921">
    <property type="entry name" value="2-isopropylmalate synthase LeuA, allosteric (dimerisation) domain"/>
    <property type="match status" value="1"/>
</dbReference>
<dbReference type="SUPFAM" id="SSF51569">
    <property type="entry name" value="Aldolase"/>
    <property type="match status" value="1"/>
</dbReference>
<dbReference type="SUPFAM" id="SSF89000">
    <property type="entry name" value="post-HMGL domain-like"/>
    <property type="match status" value="1"/>
</dbReference>
<dbReference type="PROSITE" id="PS00815">
    <property type="entry name" value="AIPM_HOMOCIT_SYNTH_1"/>
    <property type="match status" value="1"/>
</dbReference>
<dbReference type="PROSITE" id="PS00816">
    <property type="entry name" value="AIPM_HOMOCIT_SYNTH_2"/>
    <property type="match status" value="1"/>
</dbReference>
<dbReference type="PROSITE" id="PS50991">
    <property type="entry name" value="PYR_CT"/>
    <property type="match status" value="1"/>
</dbReference>
<gene>
    <name evidence="1" type="primary">leuA</name>
    <name type="ordered locus">CMS1727</name>
</gene>
<reference key="1">
    <citation type="journal article" date="2008" name="J. Bacteriol.">
        <title>Genome of the actinomycete plant pathogen Clavibacter michiganensis subsp. sepedonicus suggests recent niche adaptation.</title>
        <authorList>
            <person name="Bentley S.D."/>
            <person name="Corton C."/>
            <person name="Brown S.E."/>
            <person name="Barron A."/>
            <person name="Clark L."/>
            <person name="Doggett J."/>
            <person name="Harris B."/>
            <person name="Ormond D."/>
            <person name="Quail M.A."/>
            <person name="May G."/>
            <person name="Francis D."/>
            <person name="Knudson D."/>
            <person name="Parkhill J."/>
            <person name="Ishimaru C.A."/>
        </authorList>
    </citation>
    <scope>NUCLEOTIDE SEQUENCE [LARGE SCALE GENOMIC DNA]</scope>
    <source>
        <strain>ATCC 33113 / DSM 20744 / JCM 9667 / LMG 2889 / ICMP 2535 / C-1</strain>
    </source>
</reference>
<name>LEU1_CLASE</name>
<proteinExistence type="inferred from homology"/>
<keyword id="KW-0028">Amino-acid biosynthesis</keyword>
<keyword id="KW-0100">Branched-chain amino acid biosynthesis</keyword>
<keyword id="KW-0963">Cytoplasm</keyword>
<keyword id="KW-0432">Leucine biosynthesis</keyword>
<keyword id="KW-0460">Magnesium</keyword>
<keyword id="KW-0479">Metal-binding</keyword>
<keyword id="KW-0808">Transferase</keyword>
<feature type="chain" id="PRO_1000129503" description="2-isopropylmalate synthase">
    <location>
        <begin position="1"/>
        <end position="588"/>
    </location>
</feature>
<feature type="domain" description="Pyruvate carboxyltransferase" evidence="1">
    <location>
        <begin position="40"/>
        <end position="314"/>
    </location>
</feature>
<feature type="region of interest" description="Regulatory domain" evidence="1">
    <location>
        <begin position="456"/>
        <end position="588"/>
    </location>
</feature>
<feature type="binding site" evidence="1">
    <location>
        <position position="49"/>
    </location>
    <ligand>
        <name>Mg(2+)</name>
        <dbReference type="ChEBI" id="CHEBI:18420"/>
    </ligand>
</feature>
<feature type="binding site" evidence="1">
    <location>
        <position position="253"/>
    </location>
    <ligand>
        <name>Mg(2+)</name>
        <dbReference type="ChEBI" id="CHEBI:18420"/>
    </ligand>
</feature>
<feature type="binding site" evidence="1">
    <location>
        <position position="255"/>
    </location>
    <ligand>
        <name>Mg(2+)</name>
        <dbReference type="ChEBI" id="CHEBI:18420"/>
    </ligand>
</feature>
<feature type="binding site" evidence="1">
    <location>
        <position position="289"/>
    </location>
    <ligand>
        <name>Mg(2+)</name>
        <dbReference type="ChEBI" id="CHEBI:18420"/>
    </ligand>
</feature>
<evidence type="ECO:0000255" key="1">
    <source>
        <dbReference type="HAMAP-Rule" id="MF_00572"/>
    </source>
</evidence>
<organism>
    <name type="scientific">Clavibacter sepedonicus</name>
    <name type="common">Clavibacter michiganensis subsp. sepedonicus</name>
    <dbReference type="NCBI Taxonomy" id="31964"/>
    <lineage>
        <taxon>Bacteria</taxon>
        <taxon>Bacillati</taxon>
        <taxon>Actinomycetota</taxon>
        <taxon>Actinomycetes</taxon>
        <taxon>Micrococcales</taxon>
        <taxon>Microbacteriaceae</taxon>
        <taxon>Clavibacter</taxon>
    </lineage>
</organism>